<keyword id="KW-0025">Alternative splicing</keyword>
<keyword id="KW-1003">Cell membrane</keyword>
<keyword id="KW-1015">Disulfide bond</keyword>
<keyword id="KW-0325">Glycoprotein</keyword>
<keyword id="KW-0336">GPI-anchor</keyword>
<keyword id="KW-0378">Hydrolase</keyword>
<keyword id="KW-0449">Lipoprotein</keyword>
<keyword id="KW-0472">Membrane</keyword>
<keyword id="KW-0531">Neurotransmitter degradation</keyword>
<keyword id="KW-1185">Reference proteome</keyword>
<keyword id="KW-0964">Secreted</keyword>
<keyword id="KW-0719">Serine esterase</keyword>
<keyword id="KW-0732">Signal</keyword>
<keyword id="KW-0770">Synapse</keyword>
<name>ACES_FELCA</name>
<sequence>MRPPWCPLYTPSLAAPILLLLLFLLGGGAEAEDPELLVTVRGGQLRGVRLMAPGGPVSAFLGIPFAEPPVGPRRFLPPEPKRPWPGVLDATAFQSVCYQYVDTLYPGFEGTEMWNPNRELSEDCLYLNVWTPYPRPASPTPVLVWIYGGGFYSGASSLDVYDGRFLAQAEGTVLVSMNYRVGAFGFLALPGSREAPGNVGLLDQRLALQWVQDNVATFGGDPMSVTLFGESAGAASVGMHLLSPPSRGLFHRAVLQSGAPNGPWATVGVGEARRRATLLARLVGCPPGGAGGNDTELVACLRTRPAQDLVDHEWHVLPQESVFRFSFVPVVDGDFLSDTPEALINAGDFHGLQVLVGVVKDEGSYFLVYGAPGFSKDNESLISRAQFLAGVRVGVPQASDLAAEAVVLHYTDWLNPEDPARLREAMSDVVGDHNVVCPVAQLAGRLAAQGARVYAYIFEHRASTLSWPLWMGVPHGYEIEFIFGLPLEPSLNYTAEERIFAQRLMRYWANFARTGDPNDPRDPKVPQWPPYTAGAQQYVSLDLRPLEVRRGLRAQACAFWNRFLPKLLSATDTLDEAERQWKAEFHRWSSYMVHWKNQFDHYSKQDRCSDL</sequence>
<evidence type="ECO:0000250" key="1"/>
<evidence type="ECO:0000255" key="2"/>
<evidence type="ECO:0000255" key="3">
    <source>
        <dbReference type="PROSITE-ProRule" id="PRU10039"/>
    </source>
</evidence>
<evidence type="ECO:0000305" key="4"/>
<dbReference type="EC" id="3.1.1.7"/>
<dbReference type="EMBL" id="AF053485">
    <property type="protein sequence ID" value="AAC08995.1"/>
    <property type="molecule type" value="Genomic_DNA"/>
</dbReference>
<dbReference type="EMBL" id="AF053485">
    <property type="protein sequence ID" value="AAC08996.1"/>
    <property type="molecule type" value="Genomic_DNA"/>
</dbReference>
<dbReference type="RefSeq" id="NP_001009203.1">
    <molecule id="O62763-1"/>
    <property type="nucleotide sequence ID" value="NM_001009203.1"/>
</dbReference>
<dbReference type="RefSeq" id="XP_011288624.1">
    <molecule id="O62763-2"/>
    <property type="nucleotide sequence ID" value="XM_011290322.4"/>
</dbReference>
<dbReference type="RefSeq" id="XP_019675779.1">
    <molecule id="O62763-2"/>
    <property type="nucleotide sequence ID" value="XM_019820220.3"/>
</dbReference>
<dbReference type="RefSeq" id="XP_019675780.1">
    <molecule id="O62763-2"/>
    <property type="nucleotide sequence ID" value="XM_019820221.3"/>
</dbReference>
<dbReference type="SMR" id="O62763"/>
<dbReference type="STRING" id="9685.ENSFCAP00000020757"/>
<dbReference type="ESTHER" id="felca-ACHE">
    <property type="family name" value="ACHE"/>
</dbReference>
<dbReference type="MEROPS" id="S09.979"/>
<dbReference type="GlyCosmos" id="O62763">
    <property type="glycosylation" value="3 sites, No reported glycans"/>
</dbReference>
<dbReference type="PaxDb" id="9685-ENSFCAP00000020757"/>
<dbReference type="Ensembl" id="ENSFCAT00000032091.4">
    <molecule id="O62763-2"/>
    <property type="protein sequence ID" value="ENSFCAP00000024567.3"/>
    <property type="gene ID" value="ENSFCAG00000023546.4"/>
</dbReference>
<dbReference type="Ensembl" id="ENSFCAT00000045236.3">
    <molecule id="O62763-1"/>
    <property type="protein sequence ID" value="ENSFCAP00000027951.1"/>
    <property type="gene ID" value="ENSFCAG00000023546.4"/>
</dbReference>
<dbReference type="GeneID" id="493674"/>
<dbReference type="KEGG" id="fca:493674"/>
<dbReference type="CTD" id="43"/>
<dbReference type="eggNOG" id="KOG4389">
    <property type="taxonomic scope" value="Eukaryota"/>
</dbReference>
<dbReference type="GeneTree" id="ENSGT00940000157637"/>
<dbReference type="InParanoid" id="O62763"/>
<dbReference type="OMA" id="CDHLVAP"/>
<dbReference type="OrthoDB" id="9000293at2759"/>
<dbReference type="Proteomes" id="UP000011712">
    <property type="component" value="Chromosome E3"/>
</dbReference>
<dbReference type="Bgee" id="ENSFCAG00000023546">
    <property type="expression patterns" value="Expressed in prefrontal cortex and 10 other cell types or tissues"/>
</dbReference>
<dbReference type="GO" id="GO:0005615">
    <property type="term" value="C:extracellular space"/>
    <property type="evidence" value="ECO:0000318"/>
    <property type="project" value="GO_Central"/>
</dbReference>
<dbReference type="GO" id="GO:0005886">
    <property type="term" value="C:plasma membrane"/>
    <property type="evidence" value="ECO:0000318"/>
    <property type="project" value="GO_Central"/>
</dbReference>
<dbReference type="GO" id="GO:0098552">
    <property type="term" value="C:side of membrane"/>
    <property type="evidence" value="ECO:0007669"/>
    <property type="project" value="UniProtKB-KW"/>
</dbReference>
<dbReference type="GO" id="GO:0045202">
    <property type="term" value="C:synapse"/>
    <property type="evidence" value="ECO:0007669"/>
    <property type="project" value="UniProtKB-SubCell"/>
</dbReference>
<dbReference type="GO" id="GO:0003990">
    <property type="term" value="F:acetylcholinesterase activity"/>
    <property type="evidence" value="ECO:0000318"/>
    <property type="project" value="GO_Central"/>
</dbReference>
<dbReference type="GO" id="GO:0006581">
    <property type="term" value="P:acetylcholine catabolic process"/>
    <property type="evidence" value="ECO:0000318"/>
    <property type="project" value="GO_Central"/>
</dbReference>
<dbReference type="GO" id="GO:0019695">
    <property type="term" value="P:choline metabolic process"/>
    <property type="evidence" value="ECO:0000318"/>
    <property type="project" value="GO_Central"/>
</dbReference>
<dbReference type="CDD" id="cd00312">
    <property type="entry name" value="Esterase_lipase"/>
    <property type="match status" value="1"/>
</dbReference>
<dbReference type="FunFam" id="3.40.50.1820:FF:000029">
    <property type="entry name" value="Acetylcholinesterase"/>
    <property type="match status" value="1"/>
</dbReference>
<dbReference type="Gene3D" id="3.40.50.1820">
    <property type="entry name" value="alpha/beta hydrolase"/>
    <property type="match status" value="1"/>
</dbReference>
<dbReference type="InterPro" id="IPR029058">
    <property type="entry name" value="AB_hydrolase_fold"/>
</dbReference>
<dbReference type="InterPro" id="IPR050654">
    <property type="entry name" value="AChE-related_enzymes"/>
</dbReference>
<dbReference type="InterPro" id="IPR014788">
    <property type="entry name" value="AChE_tetra"/>
</dbReference>
<dbReference type="InterPro" id="IPR002018">
    <property type="entry name" value="CarbesteraseB"/>
</dbReference>
<dbReference type="InterPro" id="IPR019826">
    <property type="entry name" value="Carboxylesterase_B_AS"/>
</dbReference>
<dbReference type="InterPro" id="IPR019819">
    <property type="entry name" value="Carboxylesterase_B_CS"/>
</dbReference>
<dbReference type="InterPro" id="IPR000997">
    <property type="entry name" value="Cholinesterase"/>
</dbReference>
<dbReference type="PANTHER" id="PTHR43918">
    <property type="entry name" value="ACETYLCHOLINESTERASE"/>
    <property type="match status" value="1"/>
</dbReference>
<dbReference type="PANTHER" id="PTHR43918:SF11">
    <property type="entry name" value="ACETYLCHOLINESTERASE"/>
    <property type="match status" value="1"/>
</dbReference>
<dbReference type="Pfam" id="PF08674">
    <property type="entry name" value="AChE_tetra"/>
    <property type="match status" value="1"/>
</dbReference>
<dbReference type="Pfam" id="PF00135">
    <property type="entry name" value="COesterase"/>
    <property type="match status" value="1"/>
</dbReference>
<dbReference type="PRINTS" id="PR00878">
    <property type="entry name" value="CHOLNESTRASE"/>
</dbReference>
<dbReference type="SUPFAM" id="SSF53474">
    <property type="entry name" value="alpha/beta-Hydrolases"/>
    <property type="match status" value="1"/>
</dbReference>
<dbReference type="PROSITE" id="PS00122">
    <property type="entry name" value="CARBOXYLESTERASE_B_1"/>
    <property type="match status" value="1"/>
</dbReference>
<dbReference type="PROSITE" id="PS00941">
    <property type="entry name" value="CARBOXYLESTERASE_B_2"/>
    <property type="match status" value="1"/>
</dbReference>
<reference key="1">
    <citation type="journal article" date="2000" name="Biochem. Pharmacol.">
        <title>Determination of the DNA sequences of acetylcholinesterase and butyrylcholinesterase from cat and demonstration of the existence of both in cat plasma.</title>
        <authorList>
            <person name="Bartels C.F."/>
            <person name="Xie W."/>
            <person name="Miller-Lindholm A.K."/>
            <person name="Schopfer L.M."/>
            <person name="Lockridge O."/>
        </authorList>
    </citation>
    <scope>NUCLEOTIDE SEQUENCE [GENOMIC DNA] (ISOFORMS H AND T)</scope>
</reference>
<gene>
    <name type="primary">ACHE</name>
</gene>
<comment type="function">
    <text>Terminates signal transduction at the neuromuscular junction by rapid hydrolysis of the acetylcholine released into the synaptic cleft.</text>
</comment>
<comment type="catalytic activity">
    <reaction>
        <text>acetylcholine + H2O = choline + acetate + H(+)</text>
        <dbReference type="Rhea" id="RHEA:17561"/>
        <dbReference type="ChEBI" id="CHEBI:15354"/>
        <dbReference type="ChEBI" id="CHEBI:15355"/>
        <dbReference type="ChEBI" id="CHEBI:15377"/>
        <dbReference type="ChEBI" id="CHEBI:15378"/>
        <dbReference type="ChEBI" id="CHEBI:30089"/>
        <dbReference type="EC" id="3.1.1.7"/>
    </reaction>
</comment>
<comment type="subunit">
    <text evidence="1">Interacts with PRIMA1. The interaction with PRIMA1 is required to anchor it to the basal lamina of cells and organize into tetramers (By similarity). Isoform H generates GPI-anchored dimers; disulfide linked. Isoform T generates multiple structures, ranging from monomers and dimers to collagen-tailed and hydrophobic-tailed forms, in which catalytic tetramers are associated with anchoring proteins that attach them to the basal lamina or to cell membranes. In the collagen-tailed forms, isoform T subunits are associated with a specific collagen, COLQ, which triggers the formation of isoform T tetramers, from monomers and dimers.</text>
</comment>
<comment type="subcellular location">
    <subcellularLocation>
        <location>Synapse</location>
    </subcellularLocation>
    <subcellularLocation>
        <location>Secreted</location>
    </subcellularLocation>
    <subcellularLocation>
        <location evidence="1">Cell membrane</location>
        <topology evidence="1">Peripheral membrane protein</topology>
    </subcellularLocation>
</comment>
<comment type="subcellular location">
    <molecule>Isoform H</molecule>
    <subcellularLocation>
        <location>Cell membrane</location>
        <topology>Lipid-anchor</topology>
        <topology>GPI-anchor</topology>
        <orientation>Extracellular side</orientation>
    </subcellularLocation>
</comment>
<comment type="alternative products">
    <event type="alternative splicing"/>
    <isoform>
        <id>O62763-1</id>
        <name>T</name>
        <sequence type="displayed"/>
    </isoform>
    <isoform>
        <id>O62763-2</id>
        <name>H</name>
        <sequence type="described" ref="VSP_001456"/>
    </isoform>
</comment>
<comment type="similarity">
    <text evidence="4">Belongs to the type-B carboxylesterase/lipase family.</text>
</comment>
<organism>
    <name type="scientific">Felis catus</name>
    <name type="common">Cat</name>
    <name type="synonym">Felis silvestris catus</name>
    <dbReference type="NCBI Taxonomy" id="9685"/>
    <lineage>
        <taxon>Eukaryota</taxon>
        <taxon>Metazoa</taxon>
        <taxon>Chordata</taxon>
        <taxon>Craniata</taxon>
        <taxon>Vertebrata</taxon>
        <taxon>Euteleostomi</taxon>
        <taxon>Mammalia</taxon>
        <taxon>Eutheria</taxon>
        <taxon>Laurasiatheria</taxon>
        <taxon>Carnivora</taxon>
        <taxon>Feliformia</taxon>
        <taxon>Felidae</taxon>
        <taxon>Felinae</taxon>
        <taxon>Felis</taxon>
    </lineage>
</organism>
<feature type="signal peptide" evidence="1">
    <location>
        <begin position="1"/>
        <end position="31"/>
    </location>
</feature>
<feature type="chain" id="PRO_0000008586" description="Acetylcholinesterase">
    <location>
        <begin position="32"/>
        <end position="611"/>
    </location>
</feature>
<feature type="active site" description="Acyl-ester intermediate" evidence="3">
    <location>
        <position position="231"/>
    </location>
</feature>
<feature type="active site" description="Charge relay system" evidence="1">
    <location>
        <position position="362"/>
    </location>
</feature>
<feature type="active site" description="Charge relay system" evidence="1">
    <location>
        <position position="475"/>
    </location>
</feature>
<feature type="glycosylation site" description="N-linked (GlcNAc...) asparagine" evidence="2">
    <location>
        <position position="293"/>
    </location>
</feature>
<feature type="glycosylation site" description="N-linked (GlcNAc...) asparagine" evidence="2">
    <location>
        <position position="378"/>
    </location>
</feature>
<feature type="glycosylation site" description="N-linked (GlcNAc...) asparagine" evidence="2">
    <location>
        <position position="492"/>
    </location>
</feature>
<feature type="disulfide bond" evidence="1">
    <location>
        <begin position="97"/>
        <end position="124"/>
    </location>
</feature>
<feature type="disulfide bond" evidence="1">
    <location>
        <begin position="285"/>
        <end position="300"/>
    </location>
</feature>
<feature type="disulfide bond" evidence="1">
    <location>
        <begin position="437"/>
        <end position="557"/>
    </location>
</feature>
<feature type="disulfide bond" description="Interchain" evidence="1">
    <location>
        <position position="608"/>
    </location>
</feature>
<feature type="splice variant" id="VSP_001456" description="In isoform H." evidence="4">
    <original>DTLDEAERQWKAEFHRWSSYMVHWKNQFDHYSKQDRCSDL</original>
    <variation>ASKAPSTCSGPAHGEAAPRPRPGLSLPLLLLLFLLLSRLLRL</variation>
    <location>
        <begin position="572"/>
        <end position="611"/>
    </location>
</feature>
<proteinExistence type="inferred from homology"/>
<protein>
    <recommendedName>
        <fullName>Acetylcholinesterase</fullName>
        <shortName>AChE</shortName>
        <ecNumber>3.1.1.7</ecNumber>
    </recommendedName>
</protein>
<accession>O62763</accession>
<accession>O62762</accession>